<dbReference type="EC" id="2.7.4.6" evidence="1"/>
<dbReference type="EMBL" id="BX640431">
    <property type="protein sequence ID" value="CAE38150.1"/>
    <property type="molecule type" value="Genomic_DNA"/>
</dbReference>
<dbReference type="RefSeq" id="WP_003810689.1">
    <property type="nucleotide sequence ID" value="NC_002928.3"/>
</dbReference>
<dbReference type="SMR" id="Q7W6P4"/>
<dbReference type="GeneID" id="93204645"/>
<dbReference type="KEGG" id="bpa:BPP2858"/>
<dbReference type="HOGENOM" id="CLU_060216_8_1_4"/>
<dbReference type="Proteomes" id="UP000001421">
    <property type="component" value="Chromosome"/>
</dbReference>
<dbReference type="GO" id="GO:0005737">
    <property type="term" value="C:cytoplasm"/>
    <property type="evidence" value="ECO:0007669"/>
    <property type="project" value="UniProtKB-SubCell"/>
</dbReference>
<dbReference type="GO" id="GO:0005524">
    <property type="term" value="F:ATP binding"/>
    <property type="evidence" value="ECO:0007669"/>
    <property type="project" value="UniProtKB-UniRule"/>
</dbReference>
<dbReference type="GO" id="GO:0046872">
    <property type="term" value="F:metal ion binding"/>
    <property type="evidence" value="ECO:0007669"/>
    <property type="project" value="UniProtKB-KW"/>
</dbReference>
<dbReference type="GO" id="GO:0004550">
    <property type="term" value="F:nucleoside diphosphate kinase activity"/>
    <property type="evidence" value="ECO:0007669"/>
    <property type="project" value="UniProtKB-UniRule"/>
</dbReference>
<dbReference type="GO" id="GO:0006241">
    <property type="term" value="P:CTP biosynthetic process"/>
    <property type="evidence" value="ECO:0007669"/>
    <property type="project" value="UniProtKB-UniRule"/>
</dbReference>
<dbReference type="GO" id="GO:0006183">
    <property type="term" value="P:GTP biosynthetic process"/>
    <property type="evidence" value="ECO:0007669"/>
    <property type="project" value="UniProtKB-UniRule"/>
</dbReference>
<dbReference type="GO" id="GO:0006228">
    <property type="term" value="P:UTP biosynthetic process"/>
    <property type="evidence" value="ECO:0007669"/>
    <property type="project" value="UniProtKB-UniRule"/>
</dbReference>
<dbReference type="CDD" id="cd04413">
    <property type="entry name" value="NDPk_I"/>
    <property type="match status" value="1"/>
</dbReference>
<dbReference type="FunFam" id="3.30.70.141:FF:000001">
    <property type="entry name" value="Nucleoside diphosphate kinase"/>
    <property type="match status" value="1"/>
</dbReference>
<dbReference type="Gene3D" id="3.30.70.141">
    <property type="entry name" value="Nucleoside diphosphate kinase-like domain"/>
    <property type="match status" value="1"/>
</dbReference>
<dbReference type="HAMAP" id="MF_00451">
    <property type="entry name" value="NDP_kinase"/>
    <property type="match status" value="1"/>
</dbReference>
<dbReference type="InterPro" id="IPR034907">
    <property type="entry name" value="NDK-like_dom"/>
</dbReference>
<dbReference type="InterPro" id="IPR036850">
    <property type="entry name" value="NDK-like_dom_sf"/>
</dbReference>
<dbReference type="InterPro" id="IPR001564">
    <property type="entry name" value="Nucleoside_diP_kinase"/>
</dbReference>
<dbReference type="InterPro" id="IPR023005">
    <property type="entry name" value="Nucleoside_diP_kinase_AS"/>
</dbReference>
<dbReference type="NCBIfam" id="NF001908">
    <property type="entry name" value="PRK00668.1"/>
    <property type="match status" value="1"/>
</dbReference>
<dbReference type="PANTHER" id="PTHR46161">
    <property type="entry name" value="NUCLEOSIDE DIPHOSPHATE KINASE"/>
    <property type="match status" value="1"/>
</dbReference>
<dbReference type="PANTHER" id="PTHR46161:SF3">
    <property type="entry name" value="NUCLEOSIDE DIPHOSPHATE KINASE DDB_G0292928-RELATED"/>
    <property type="match status" value="1"/>
</dbReference>
<dbReference type="Pfam" id="PF00334">
    <property type="entry name" value="NDK"/>
    <property type="match status" value="1"/>
</dbReference>
<dbReference type="PRINTS" id="PR01243">
    <property type="entry name" value="NUCDPKINASE"/>
</dbReference>
<dbReference type="SMART" id="SM00562">
    <property type="entry name" value="NDK"/>
    <property type="match status" value="1"/>
</dbReference>
<dbReference type="SUPFAM" id="SSF54919">
    <property type="entry name" value="Nucleoside diphosphate kinase, NDK"/>
    <property type="match status" value="1"/>
</dbReference>
<dbReference type="PROSITE" id="PS00469">
    <property type="entry name" value="NDPK"/>
    <property type="match status" value="1"/>
</dbReference>
<dbReference type="PROSITE" id="PS51374">
    <property type="entry name" value="NDPK_LIKE"/>
    <property type="match status" value="1"/>
</dbReference>
<accession>Q7W6P4</accession>
<gene>
    <name evidence="1" type="primary">ndk</name>
    <name type="ordered locus">BPP2858</name>
</gene>
<name>NDK_BORPA</name>
<feature type="chain" id="PRO_0000136952" description="Nucleoside diphosphate kinase">
    <location>
        <begin position="1"/>
        <end position="141"/>
    </location>
</feature>
<feature type="active site" description="Pros-phosphohistidine intermediate" evidence="1">
    <location>
        <position position="117"/>
    </location>
</feature>
<feature type="binding site" evidence="1">
    <location>
        <position position="11"/>
    </location>
    <ligand>
        <name>ATP</name>
        <dbReference type="ChEBI" id="CHEBI:30616"/>
    </ligand>
</feature>
<feature type="binding site" evidence="1">
    <location>
        <position position="59"/>
    </location>
    <ligand>
        <name>ATP</name>
        <dbReference type="ChEBI" id="CHEBI:30616"/>
    </ligand>
</feature>
<feature type="binding site" evidence="1">
    <location>
        <position position="87"/>
    </location>
    <ligand>
        <name>ATP</name>
        <dbReference type="ChEBI" id="CHEBI:30616"/>
    </ligand>
</feature>
<feature type="binding site" evidence="1">
    <location>
        <position position="93"/>
    </location>
    <ligand>
        <name>ATP</name>
        <dbReference type="ChEBI" id="CHEBI:30616"/>
    </ligand>
</feature>
<feature type="binding site" evidence="1">
    <location>
        <position position="104"/>
    </location>
    <ligand>
        <name>ATP</name>
        <dbReference type="ChEBI" id="CHEBI:30616"/>
    </ligand>
</feature>
<feature type="binding site" evidence="1">
    <location>
        <position position="114"/>
    </location>
    <ligand>
        <name>ATP</name>
        <dbReference type="ChEBI" id="CHEBI:30616"/>
    </ligand>
</feature>
<organism>
    <name type="scientific">Bordetella parapertussis (strain 12822 / ATCC BAA-587 / NCTC 13253)</name>
    <dbReference type="NCBI Taxonomy" id="257311"/>
    <lineage>
        <taxon>Bacteria</taxon>
        <taxon>Pseudomonadati</taxon>
        <taxon>Pseudomonadota</taxon>
        <taxon>Betaproteobacteria</taxon>
        <taxon>Burkholderiales</taxon>
        <taxon>Alcaligenaceae</taxon>
        <taxon>Bordetella</taxon>
    </lineage>
</organism>
<evidence type="ECO:0000255" key="1">
    <source>
        <dbReference type="HAMAP-Rule" id="MF_00451"/>
    </source>
</evidence>
<comment type="function">
    <text evidence="1">Major role in the synthesis of nucleoside triphosphates other than ATP. The ATP gamma phosphate is transferred to the NDP beta phosphate via a ping-pong mechanism, using a phosphorylated active-site intermediate.</text>
</comment>
<comment type="catalytic activity">
    <reaction evidence="1">
        <text>a 2'-deoxyribonucleoside 5'-diphosphate + ATP = a 2'-deoxyribonucleoside 5'-triphosphate + ADP</text>
        <dbReference type="Rhea" id="RHEA:44640"/>
        <dbReference type="ChEBI" id="CHEBI:30616"/>
        <dbReference type="ChEBI" id="CHEBI:61560"/>
        <dbReference type="ChEBI" id="CHEBI:73316"/>
        <dbReference type="ChEBI" id="CHEBI:456216"/>
        <dbReference type="EC" id="2.7.4.6"/>
    </reaction>
</comment>
<comment type="catalytic activity">
    <reaction evidence="1">
        <text>a ribonucleoside 5'-diphosphate + ATP = a ribonucleoside 5'-triphosphate + ADP</text>
        <dbReference type="Rhea" id="RHEA:18113"/>
        <dbReference type="ChEBI" id="CHEBI:30616"/>
        <dbReference type="ChEBI" id="CHEBI:57930"/>
        <dbReference type="ChEBI" id="CHEBI:61557"/>
        <dbReference type="ChEBI" id="CHEBI:456216"/>
        <dbReference type="EC" id="2.7.4.6"/>
    </reaction>
</comment>
<comment type="cofactor">
    <cofactor evidence="1">
        <name>Mg(2+)</name>
        <dbReference type="ChEBI" id="CHEBI:18420"/>
    </cofactor>
</comment>
<comment type="subunit">
    <text evidence="1">Homotetramer.</text>
</comment>
<comment type="subcellular location">
    <subcellularLocation>
        <location evidence="1">Cytoplasm</location>
    </subcellularLocation>
</comment>
<comment type="similarity">
    <text evidence="1">Belongs to the NDK family.</text>
</comment>
<protein>
    <recommendedName>
        <fullName evidence="1">Nucleoside diphosphate kinase</fullName>
        <shortName evidence="1">NDK</shortName>
        <shortName evidence="1">NDP kinase</shortName>
        <ecNumber evidence="1">2.7.4.6</ecNumber>
    </recommendedName>
    <alternativeName>
        <fullName evidence="1">Nucleoside-2-P kinase</fullName>
    </alternativeName>
</protein>
<keyword id="KW-0067">ATP-binding</keyword>
<keyword id="KW-0963">Cytoplasm</keyword>
<keyword id="KW-0418">Kinase</keyword>
<keyword id="KW-0460">Magnesium</keyword>
<keyword id="KW-0479">Metal-binding</keyword>
<keyword id="KW-0546">Nucleotide metabolism</keyword>
<keyword id="KW-0547">Nucleotide-binding</keyword>
<keyword id="KW-0597">Phosphoprotein</keyword>
<keyword id="KW-0808">Transferase</keyword>
<reference key="1">
    <citation type="journal article" date="2003" name="Nat. Genet.">
        <title>Comparative analysis of the genome sequences of Bordetella pertussis, Bordetella parapertussis and Bordetella bronchiseptica.</title>
        <authorList>
            <person name="Parkhill J."/>
            <person name="Sebaihia M."/>
            <person name="Preston A."/>
            <person name="Murphy L.D."/>
            <person name="Thomson N.R."/>
            <person name="Harris D.E."/>
            <person name="Holden M.T.G."/>
            <person name="Churcher C.M."/>
            <person name="Bentley S.D."/>
            <person name="Mungall K.L."/>
            <person name="Cerdeno-Tarraga A.-M."/>
            <person name="Temple L."/>
            <person name="James K.D."/>
            <person name="Harris B."/>
            <person name="Quail M.A."/>
            <person name="Achtman M."/>
            <person name="Atkin R."/>
            <person name="Baker S."/>
            <person name="Basham D."/>
            <person name="Bason N."/>
            <person name="Cherevach I."/>
            <person name="Chillingworth T."/>
            <person name="Collins M."/>
            <person name="Cronin A."/>
            <person name="Davis P."/>
            <person name="Doggett J."/>
            <person name="Feltwell T."/>
            <person name="Goble A."/>
            <person name="Hamlin N."/>
            <person name="Hauser H."/>
            <person name="Holroyd S."/>
            <person name="Jagels K."/>
            <person name="Leather S."/>
            <person name="Moule S."/>
            <person name="Norberczak H."/>
            <person name="O'Neil S."/>
            <person name="Ormond D."/>
            <person name="Price C."/>
            <person name="Rabbinowitsch E."/>
            <person name="Rutter S."/>
            <person name="Sanders M."/>
            <person name="Saunders D."/>
            <person name="Seeger K."/>
            <person name="Sharp S."/>
            <person name="Simmonds M."/>
            <person name="Skelton J."/>
            <person name="Squares R."/>
            <person name="Squares S."/>
            <person name="Stevens K."/>
            <person name="Unwin L."/>
            <person name="Whitehead S."/>
            <person name="Barrell B.G."/>
            <person name="Maskell D.J."/>
        </authorList>
    </citation>
    <scope>NUCLEOTIDE SEQUENCE [LARGE SCALE GENOMIC DNA]</scope>
    <source>
        <strain>12822 / ATCC BAA-587 / NCTC 13253</strain>
    </source>
</reference>
<sequence length="141" mass="15460">MSIERTLSIIKPDAVAKNVVGQIVARFEQAGLKVIAARMQQLSRTDAERFYAVHKERPFFKDLVDFMVSGPVFVQVLEGESAIQKNRDLMGATDPKKAAPGTIRADFADSIDANAVHGSDAPETAAVEVAFFFPEINIHSR</sequence>
<proteinExistence type="inferred from homology"/>